<comment type="function">
    <text evidence="1">Necessary for normal cell division and for the maintenance of normal septation.</text>
</comment>
<comment type="cofactor">
    <cofactor evidence="1">
        <name>Mg(2+)</name>
        <dbReference type="ChEBI" id="CHEBI:18420"/>
    </cofactor>
</comment>
<comment type="similarity">
    <text evidence="1">Belongs to the TRAFAC class TrmE-Era-EngA-EngB-Septin-like GTPase superfamily. EngB GTPase family.</text>
</comment>
<sequence>MIIKSAKFMSSATKPGNYPPPELPEIAFAGRSNVGKSSLINSLLKRKKLVKTSSTPGRTQLLNFFEVNESLVFVDLPGYGYAKVSKEMRKKWGQMIETFITTRKTLHGVVLILDLRRIPGGQERENLAWFDLNNIPVILVATKADKFSRQRQLAQQKEMAKALGIPLDVIHVFSAKTGQGRDELWESILDLCEIDDFEQGDDDNV</sequence>
<dbReference type="EMBL" id="CP001322">
    <property type="protein sequence ID" value="ACL05096.1"/>
    <property type="molecule type" value="Genomic_DNA"/>
</dbReference>
<dbReference type="SMR" id="B8FLF0"/>
<dbReference type="KEGG" id="dal:Dalk_3408"/>
<dbReference type="eggNOG" id="COG0218">
    <property type="taxonomic scope" value="Bacteria"/>
</dbReference>
<dbReference type="HOGENOM" id="CLU_033732_3_0_7"/>
<dbReference type="Proteomes" id="UP000000739">
    <property type="component" value="Chromosome"/>
</dbReference>
<dbReference type="GO" id="GO:0005829">
    <property type="term" value="C:cytosol"/>
    <property type="evidence" value="ECO:0007669"/>
    <property type="project" value="TreeGrafter"/>
</dbReference>
<dbReference type="GO" id="GO:0005525">
    <property type="term" value="F:GTP binding"/>
    <property type="evidence" value="ECO:0007669"/>
    <property type="project" value="UniProtKB-UniRule"/>
</dbReference>
<dbReference type="GO" id="GO:0046872">
    <property type="term" value="F:metal ion binding"/>
    <property type="evidence" value="ECO:0007669"/>
    <property type="project" value="UniProtKB-KW"/>
</dbReference>
<dbReference type="GO" id="GO:0000917">
    <property type="term" value="P:division septum assembly"/>
    <property type="evidence" value="ECO:0007669"/>
    <property type="project" value="UniProtKB-KW"/>
</dbReference>
<dbReference type="CDD" id="cd01876">
    <property type="entry name" value="YihA_EngB"/>
    <property type="match status" value="1"/>
</dbReference>
<dbReference type="FunFam" id="3.40.50.300:FF:000098">
    <property type="entry name" value="Probable GTP-binding protein EngB"/>
    <property type="match status" value="1"/>
</dbReference>
<dbReference type="Gene3D" id="3.40.50.300">
    <property type="entry name" value="P-loop containing nucleotide triphosphate hydrolases"/>
    <property type="match status" value="1"/>
</dbReference>
<dbReference type="HAMAP" id="MF_00321">
    <property type="entry name" value="GTPase_EngB"/>
    <property type="match status" value="1"/>
</dbReference>
<dbReference type="InterPro" id="IPR030393">
    <property type="entry name" value="G_ENGB_dom"/>
</dbReference>
<dbReference type="InterPro" id="IPR006073">
    <property type="entry name" value="GTP-bd"/>
</dbReference>
<dbReference type="InterPro" id="IPR019987">
    <property type="entry name" value="GTP-bd_ribosome_bio_YsxC"/>
</dbReference>
<dbReference type="InterPro" id="IPR027417">
    <property type="entry name" value="P-loop_NTPase"/>
</dbReference>
<dbReference type="InterPro" id="IPR005225">
    <property type="entry name" value="Small_GTP-bd"/>
</dbReference>
<dbReference type="NCBIfam" id="TIGR03598">
    <property type="entry name" value="GTPase_YsxC"/>
    <property type="match status" value="1"/>
</dbReference>
<dbReference type="NCBIfam" id="TIGR00231">
    <property type="entry name" value="small_GTP"/>
    <property type="match status" value="1"/>
</dbReference>
<dbReference type="PANTHER" id="PTHR11649:SF13">
    <property type="entry name" value="ENGB-TYPE G DOMAIN-CONTAINING PROTEIN"/>
    <property type="match status" value="1"/>
</dbReference>
<dbReference type="PANTHER" id="PTHR11649">
    <property type="entry name" value="MSS1/TRME-RELATED GTP-BINDING PROTEIN"/>
    <property type="match status" value="1"/>
</dbReference>
<dbReference type="Pfam" id="PF01926">
    <property type="entry name" value="MMR_HSR1"/>
    <property type="match status" value="1"/>
</dbReference>
<dbReference type="SUPFAM" id="SSF52540">
    <property type="entry name" value="P-loop containing nucleoside triphosphate hydrolases"/>
    <property type="match status" value="1"/>
</dbReference>
<dbReference type="PROSITE" id="PS51706">
    <property type="entry name" value="G_ENGB"/>
    <property type="match status" value="1"/>
</dbReference>
<evidence type="ECO:0000255" key="1">
    <source>
        <dbReference type="HAMAP-Rule" id="MF_00321"/>
    </source>
</evidence>
<reference key="1">
    <citation type="journal article" date="2012" name="Environ. Microbiol.">
        <title>The genome sequence of Desulfatibacillum alkenivorans AK-01: a blueprint for anaerobic alkane oxidation.</title>
        <authorList>
            <person name="Callaghan A.V."/>
            <person name="Morris B.E."/>
            <person name="Pereira I.A."/>
            <person name="McInerney M.J."/>
            <person name="Austin R.N."/>
            <person name="Groves J.T."/>
            <person name="Kukor J.J."/>
            <person name="Suflita J.M."/>
            <person name="Young L.Y."/>
            <person name="Zylstra G.J."/>
            <person name="Wawrik B."/>
        </authorList>
    </citation>
    <scope>NUCLEOTIDE SEQUENCE [LARGE SCALE GENOMIC DNA]</scope>
    <source>
        <strain>AK-01</strain>
    </source>
</reference>
<feature type="chain" id="PRO_1000119593" description="Probable GTP-binding protein EngB">
    <location>
        <begin position="1"/>
        <end position="205"/>
    </location>
</feature>
<feature type="domain" description="EngB-type G" evidence="1">
    <location>
        <begin position="22"/>
        <end position="194"/>
    </location>
</feature>
<feature type="binding site" evidence="1">
    <location>
        <begin position="30"/>
        <end position="37"/>
    </location>
    <ligand>
        <name>GTP</name>
        <dbReference type="ChEBI" id="CHEBI:37565"/>
    </ligand>
</feature>
<feature type="binding site" evidence="1">
    <location>
        <position position="37"/>
    </location>
    <ligand>
        <name>Mg(2+)</name>
        <dbReference type="ChEBI" id="CHEBI:18420"/>
    </ligand>
</feature>
<feature type="binding site" evidence="1">
    <location>
        <begin position="57"/>
        <end position="61"/>
    </location>
    <ligand>
        <name>GTP</name>
        <dbReference type="ChEBI" id="CHEBI:37565"/>
    </ligand>
</feature>
<feature type="binding site" evidence="1">
    <location>
        <position position="59"/>
    </location>
    <ligand>
        <name>Mg(2+)</name>
        <dbReference type="ChEBI" id="CHEBI:18420"/>
    </ligand>
</feature>
<feature type="binding site" evidence="1">
    <location>
        <begin position="75"/>
        <end position="78"/>
    </location>
    <ligand>
        <name>GTP</name>
        <dbReference type="ChEBI" id="CHEBI:37565"/>
    </ligand>
</feature>
<feature type="binding site" evidence="1">
    <location>
        <begin position="142"/>
        <end position="145"/>
    </location>
    <ligand>
        <name>GTP</name>
        <dbReference type="ChEBI" id="CHEBI:37565"/>
    </ligand>
</feature>
<feature type="binding site" evidence="1">
    <location>
        <begin position="173"/>
        <end position="175"/>
    </location>
    <ligand>
        <name>GTP</name>
        <dbReference type="ChEBI" id="CHEBI:37565"/>
    </ligand>
</feature>
<organism>
    <name type="scientific">Desulfatibacillum aliphaticivorans</name>
    <dbReference type="NCBI Taxonomy" id="218208"/>
    <lineage>
        <taxon>Bacteria</taxon>
        <taxon>Pseudomonadati</taxon>
        <taxon>Thermodesulfobacteriota</taxon>
        <taxon>Desulfobacteria</taxon>
        <taxon>Desulfobacterales</taxon>
        <taxon>Desulfatibacillaceae</taxon>
        <taxon>Desulfatibacillum</taxon>
    </lineage>
</organism>
<proteinExistence type="inferred from homology"/>
<keyword id="KW-0131">Cell cycle</keyword>
<keyword id="KW-0132">Cell division</keyword>
<keyword id="KW-0342">GTP-binding</keyword>
<keyword id="KW-0460">Magnesium</keyword>
<keyword id="KW-0479">Metal-binding</keyword>
<keyword id="KW-0547">Nucleotide-binding</keyword>
<keyword id="KW-1185">Reference proteome</keyword>
<keyword id="KW-0717">Septation</keyword>
<name>ENGB_DESAL</name>
<accession>B8FLF0</accession>
<protein>
    <recommendedName>
        <fullName evidence="1">Probable GTP-binding protein EngB</fullName>
    </recommendedName>
</protein>
<gene>
    <name evidence="1" type="primary">engB</name>
    <name type="ordered locus">Dalk_3408</name>
</gene>